<feature type="chain" id="PRO_0000077138" description="Large ribosomal subunit protein uL3">
    <location>
        <begin position="1"/>
        <end position="211"/>
    </location>
</feature>
<feature type="modified residue" description="N5-methylglutamine" evidence="1">
    <location>
        <position position="150"/>
    </location>
</feature>
<comment type="function">
    <text evidence="1">One of the primary rRNA binding proteins, it binds directly near the 3'-end of the 23S rRNA, where it nucleates assembly of the 50S subunit.</text>
</comment>
<comment type="subunit">
    <text evidence="1">Part of the 50S ribosomal subunit. Forms a cluster with proteins L14 and L19.</text>
</comment>
<comment type="PTM">
    <text evidence="1">Methylated by PrmB.</text>
</comment>
<comment type="similarity">
    <text evidence="1">Belongs to the universal ribosomal protein uL3 family.</text>
</comment>
<evidence type="ECO:0000255" key="1">
    <source>
        <dbReference type="HAMAP-Rule" id="MF_01325"/>
    </source>
</evidence>
<evidence type="ECO:0000305" key="2"/>
<gene>
    <name evidence="1" type="primary">rplC</name>
    <name type="ordered locus">PA4263</name>
</gene>
<dbReference type="EMBL" id="AE004091">
    <property type="protein sequence ID" value="AAG07651.1"/>
    <property type="molecule type" value="Genomic_DNA"/>
</dbReference>
<dbReference type="PIR" id="E83116">
    <property type="entry name" value="E83116"/>
</dbReference>
<dbReference type="RefSeq" id="NP_252953.1">
    <property type="nucleotide sequence ID" value="NC_002516.2"/>
</dbReference>
<dbReference type="RefSeq" id="WP_003103877.1">
    <property type="nucleotide sequence ID" value="NZ_QZGE01000028.1"/>
</dbReference>
<dbReference type="PDB" id="7UNR">
    <property type="method" value="EM"/>
    <property type="resolution" value="2.90 A"/>
    <property type="chains" value="D=1-211"/>
</dbReference>
<dbReference type="PDB" id="7UNU">
    <property type="method" value="EM"/>
    <property type="resolution" value="2.90 A"/>
    <property type="chains" value="D=1-211"/>
</dbReference>
<dbReference type="PDB" id="7UNV">
    <property type="method" value="EM"/>
    <property type="resolution" value="2.70 A"/>
    <property type="chains" value="D=1-211"/>
</dbReference>
<dbReference type="PDB" id="7UNW">
    <property type="method" value="EM"/>
    <property type="resolution" value="2.60 A"/>
    <property type="chains" value="D=1-211"/>
</dbReference>
<dbReference type="PDB" id="8CD1">
    <property type="method" value="EM"/>
    <property type="resolution" value="3.00 A"/>
    <property type="chains" value="D=1-211"/>
</dbReference>
<dbReference type="PDB" id="8RWG">
    <property type="method" value="EM"/>
    <property type="resolution" value="2.46 A"/>
    <property type="chains" value="E=1-211"/>
</dbReference>
<dbReference type="PDBsum" id="7UNR"/>
<dbReference type="PDBsum" id="7UNU"/>
<dbReference type="PDBsum" id="7UNV"/>
<dbReference type="PDBsum" id="7UNW"/>
<dbReference type="PDBsum" id="8CD1"/>
<dbReference type="PDBsum" id="8RWG"/>
<dbReference type="EMDB" id="EMD-16566"/>
<dbReference type="EMDB" id="EMD-19547"/>
<dbReference type="EMDB" id="EMD-26630"/>
<dbReference type="EMDB" id="EMD-26633"/>
<dbReference type="EMDB" id="EMD-26634"/>
<dbReference type="EMDB" id="EMD-26635"/>
<dbReference type="SMR" id="Q9HWD5"/>
<dbReference type="FunCoup" id="Q9HWD5">
    <property type="interactions" value="952"/>
</dbReference>
<dbReference type="STRING" id="208964.PA4263"/>
<dbReference type="PaxDb" id="208964-PA4263"/>
<dbReference type="GeneID" id="77219198"/>
<dbReference type="GeneID" id="881728"/>
<dbReference type="KEGG" id="pae:PA4263"/>
<dbReference type="PATRIC" id="fig|208964.12.peg.4464"/>
<dbReference type="PseudoCAP" id="PA4263"/>
<dbReference type="HOGENOM" id="CLU_044142_4_1_6"/>
<dbReference type="InParanoid" id="Q9HWD5"/>
<dbReference type="OrthoDB" id="9806135at2"/>
<dbReference type="PhylomeDB" id="Q9HWD5"/>
<dbReference type="BioCyc" id="PAER208964:G1FZ6-4336-MONOMER"/>
<dbReference type="PRO" id="PR:Q9HWD5"/>
<dbReference type="Proteomes" id="UP000002438">
    <property type="component" value="Chromosome"/>
</dbReference>
<dbReference type="GO" id="GO:0022625">
    <property type="term" value="C:cytosolic large ribosomal subunit"/>
    <property type="evidence" value="ECO:0000318"/>
    <property type="project" value="GO_Central"/>
</dbReference>
<dbReference type="GO" id="GO:0019843">
    <property type="term" value="F:rRNA binding"/>
    <property type="evidence" value="ECO:0007669"/>
    <property type="project" value="UniProtKB-UniRule"/>
</dbReference>
<dbReference type="GO" id="GO:0003735">
    <property type="term" value="F:structural constituent of ribosome"/>
    <property type="evidence" value="ECO:0000318"/>
    <property type="project" value="GO_Central"/>
</dbReference>
<dbReference type="GO" id="GO:0006412">
    <property type="term" value="P:translation"/>
    <property type="evidence" value="ECO:0007669"/>
    <property type="project" value="UniProtKB-UniRule"/>
</dbReference>
<dbReference type="FunFam" id="2.40.30.10:FF:000004">
    <property type="entry name" value="50S ribosomal protein L3"/>
    <property type="match status" value="1"/>
</dbReference>
<dbReference type="FunFam" id="3.30.160.810:FF:000001">
    <property type="entry name" value="50S ribosomal protein L3"/>
    <property type="match status" value="1"/>
</dbReference>
<dbReference type="Gene3D" id="3.30.160.810">
    <property type="match status" value="1"/>
</dbReference>
<dbReference type="Gene3D" id="2.40.30.10">
    <property type="entry name" value="Translation factors"/>
    <property type="match status" value="1"/>
</dbReference>
<dbReference type="HAMAP" id="MF_01325_B">
    <property type="entry name" value="Ribosomal_uL3_B"/>
    <property type="match status" value="1"/>
</dbReference>
<dbReference type="InterPro" id="IPR000597">
    <property type="entry name" value="Ribosomal_uL3"/>
</dbReference>
<dbReference type="InterPro" id="IPR019927">
    <property type="entry name" value="Ribosomal_uL3_bac/org-type"/>
</dbReference>
<dbReference type="InterPro" id="IPR019926">
    <property type="entry name" value="Ribosomal_uL3_CS"/>
</dbReference>
<dbReference type="InterPro" id="IPR009000">
    <property type="entry name" value="Transl_B-barrel_sf"/>
</dbReference>
<dbReference type="NCBIfam" id="TIGR03625">
    <property type="entry name" value="L3_bact"/>
    <property type="match status" value="1"/>
</dbReference>
<dbReference type="PANTHER" id="PTHR11229">
    <property type="entry name" value="50S RIBOSOMAL PROTEIN L3"/>
    <property type="match status" value="1"/>
</dbReference>
<dbReference type="PANTHER" id="PTHR11229:SF16">
    <property type="entry name" value="LARGE RIBOSOMAL SUBUNIT PROTEIN UL3C"/>
    <property type="match status" value="1"/>
</dbReference>
<dbReference type="Pfam" id="PF00297">
    <property type="entry name" value="Ribosomal_L3"/>
    <property type="match status" value="1"/>
</dbReference>
<dbReference type="SUPFAM" id="SSF50447">
    <property type="entry name" value="Translation proteins"/>
    <property type="match status" value="1"/>
</dbReference>
<dbReference type="PROSITE" id="PS00474">
    <property type="entry name" value="RIBOSOMAL_L3"/>
    <property type="match status" value="1"/>
</dbReference>
<proteinExistence type="evidence at protein level"/>
<keyword id="KW-0002">3D-structure</keyword>
<keyword id="KW-0488">Methylation</keyword>
<keyword id="KW-1185">Reference proteome</keyword>
<keyword id="KW-0687">Ribonucleoprotein</keyword>
<keyword id="KW-0689">Ribosomal protein</keyword>
<keyword id="KW-0694">RNA-binding</keyword>
<keyword id="KW-0699">rRNA-binding</keyword>
<sequence length="211" mass="22592">MTIGVVGRKCGMTRIFTEEGVSIPVTVIEVEPNRVTQFKTEETDGYRAVQVTAGERRASRVTKAQAGHFAKANVAAGRGVWEFRLGEEQYAAGDQITVDLFQAGQMVDVTGESKGKGFAGTIKRWNFRGQDNTHGNSVSHRVPGSIGQCQTPGRVFKGKKMSGHLGAERVTVQSLEIVRVDAERNLLLVKGAVPGATGGDVIVRPAAKARG</sequence>
<reference key="1">
    <citation type="journal article" date="2000" name="Nature">
        <title>Complete genome sequence of Pseudomonas aeruginosa PAO1, an opportunistic pathogen.</title>
        <authorList>
            <person name="Stover C.K."/>
            <person name="Pham X.-Q.T."/>
            <person name="Erwin A.L."/>
            <person name="Mizoguchi S.D."/>
            <person name="Warrener P."/>
            <person name="Hickey M.J."/>
            <person name="Brinkman F.S.L."/>
            <person name="Hufnagle W.O."/>
            <person name="Kowalik D.J."/>
            <person name="Lagrou M."/>
            <person name="Garber R.L."/>
            <person name="Goltry L."/>
            <person name="Tolentino E."/>
            <person name="Westbrock-Wadman S."/>
            <person name="Yuan Y."/>
            <person name="Brody L.L."/>
            <person name="Coulter S.N."/>
            <person name="Folger K.R."/>
            <person name="Kas A."/>
            <person name="Larbig K."/>
            <person name="Lim R.M."/>
            <person name="Smith K.A."/>
            <person name="Spencer D.H."/>
            <person name="Wong G.K.-S."/>
            <person name="Wu Z."/>
            <person name="Paulsen I.T."/>
            <person name="Reizer J."/>
            <person name="Saier M.H. Jr."/>
            <person name="Hancock R.E.W."/>
            <person name="Lory S."/>
            <person name="Olson M.V."/>
        </authorList>
    </citation>
    <scope>NUCLEOTIDE SEQUENCE [LARGE SCALE GENOMIC DNA]</scope>
    <source>
        <strain>ATCC 15692 / DSM 22644 / CIP 104116 / JCM 14847 / LMG 12228 / 1C / PRS 101 / PAO1</strain>
    </source>
</reference>
<accession>Q9HWD5</accession>
<protein>
    <recommendedName>
        <fullName evidence="1">Large ribosomal subunit protein uL3</fullName>
    </recommendedName>
    <alternativeName>
        <fullName evidence="2">50S ribosomal protein L3</fullName>
    </alternativeName>
</protein>
<organism>
    <name type="scientific">Pseudomonas aeruginosa (strain ATCC 15692 / DSM 22644 / CIP 104116 / JCM 14847 / LMG 12228 / 1C / PRS 101 / PAO1)</name>
    <dbReference type="NCBI Taxonomy" id="208964"/>
    <lineage>
        <taxon>Bacteria</taxon>
        <taxon>Pseudomonadati</taxon>
        <taxon>Pseudomonadota</taxon>
        <taxon>Gammaproteobacteria</taxon>
        <taxon>Pseudomonadales</taxon>
        <taxon>Pseudomonadaceae</taxon>
        <taxon>Pseudomonas</taxon>
    </lineage>
</organism>
<name>RL3_PSEAE</name>